<feature type="signal peptide" evidence="3">
    <location>
        <begin position="1"/>
        <end position="51"/>
    </location>
</feature>
<feature type="propeptide" id="PRO_0000239803" evidence="1">
    <location>
        <begin position="52"/>
        <end position="212"/>
    </location>
</feature>
<feature type="chain" id="PRO_0000239804" description="A disintegrin and metalloproteinase with thrombospondin motifs 4">
    <location>
        <begin position="213"/>
        <end position="837"/>
    </location>
</feature>
<feature type="domain" description="Peptidase M12B" evidence="5">
    <location>
        <begin position="218"/>
        <end position="428"/>
    </location>
</feature>
<feature type="domain" description="Disintegrin">
    <location>
        <begin position="437"/>
        <end position="519"/>
    </location>
</feature>
<feature type="domain" description="TSP type-1" evidence="4">
    <location>
        <begin position="520"/>
        <end position="575"/>
    </location>
</feature>
<feature type="region of interest" description="Disordered" evidence="7">
    <location>
        <begin position="166"/>
        <end position="191"/>
    </location>
</feature>
<feature type="region of interest" description="Spacer" evidence="1">
    <location>
        <begin position="686"/>
        <end position="837"/>
    </location>
</feature>
<feature type="short sequence motif" description="Cysteine switch" evidence="1">
    <location>
        <begin position="192"/>
        <end position="199"/>
    </location>
</feature>
<feature type="active site" evidence="5 6">
    <location>
        <position position="362"/>
    </location>
</feature>
<feature type="binding site" description="in inhibited form" evidence="1">
    <location>
        <position position="194"/>
    </location>
    <ligand>
        <name>Zn(2+)</name>
        <dbReference type="ChEBI" id="CHEBI:29105"/>
        <note>catalytic</note>
    </ligand>
</feature>
<feature type="binding site" evidence="2">
    <location>
        <position position="361"/>
    </location>
    <ligand>
        <name>Zn(2+)</name>
        <dbReference type="ChEBI" id="CHEBI:29105"/>
        <note>catalytic</note>
    </ligand>
</feature>
<feature type="binding site" evidence="2">
    <location>
        <position position="365"/>
    </location>
    <ligand>
        <name>Zn(2+)</name>
        <dbReference type="ChEBI" id="CHEBI:29105"/>
        <note>catalytic</note>
    </ligand>
</feature>
<feature type="binding site" evidence="2">
    <location>
        <position position="371"/>
    </location>
    <ligand>
        <name>Zn(2+)</name>
        <dbReference type="ChEBI" id="CHEBI:29105"/>
        <note>catalytic</note>
    </ligand>
</feature>
<feature type="glycosylation site" description="N-linked (GlcNAc...) asparagine" evidence="3">
    <location>
        <position position="68"/>
    </location>
</feature>
<feature type="disulfide bond" evidence="2">
    <location>
        <begin position="293"/>
        <end position="345"/>
    </location>
</feature>
<feature type="disulfide bond" evidence="2">
    <location>
        <begin position="322"/>
        <end position="327"/>
    </location>
</feature>
<feature type="disulfide bond" evidence="2">
    <location>
        <begin position="339"/>
        <end position="423"/>
    </location>
</feature>
<feature type="disulfide bond" evidence="2">
    <location>
        <begin position="377"/>
        <end position="407"/>
    </location>
</feature>
<feature type="disulfide bond" evidence="2">
    <location>
        <begin position="449"/>
        <end position="472"/>
    </location>
</feature>
<feature type="disulfide bond" evidence="2">
    <location>
        <begin position="460"/>
        <end position="482"/>
    </location>
</feature>
<feature type="disulfide bond" evidence="2">
    <location>
        <begin position="467"/>
        <end position="501"/>
    </location>
</feature>
<feature type="disulfide bond" evidence="2">
    <location>
        <begin position="495"/>
        <end position="506"/>
    </location>
</feature>
<feature type="disulfide bond" evidence="1">
    <location>
        <begin position="532"/>
        <end position="569"/>
    </location>
</feature>
<feature type="disulfide bond" evidence="1">
    <location>
        <begin position="536"/>
        <end position="574"/>
    </location>
</feature>
<feature type="disulfide bond" evidence="1">
    <location>
        <begin position="547"/>
        <end position="559"/>
    </location>
</feature>
<reference key="1">
    <citation type="submission" date="2004-11" db="EMBL/GenBank/DDBJ databases">
        <authorList>
            <consortium name="The German cDNA consortium"/>
        </authorList>
    </citation>
    <scope>NUCLEOTIDE SEQUENCE [LARGE SCALE MRNA]</scope>
    <source>
        <tissue>Kidney</tissue>
    </source>
</reference>
<gene>
    <name type="primary">ADAMTS4</name>
</gene>
<name>ATS4_PONAB</name>
<evidence type="ECO:0000250" key="1"/>
<evidence type="ECO:0000250" key="2">
    <source>
        <dbReference type="UniProtKB" id="O75173"/>
    </source>
</evidence>
<evidence type="ECO:0000255" key="3"/>
<evidence type="ECO:0000255" key="4">
    <source>
        <dbReference type="PROSITE-ProRule" id="PRU00210"/>
    </source>
</evidence>
<evidence type="ECO:0000255" key="5">
    <source>
        <dbReference type="PROSITE-ProRule" id="PRU00276"/>
    </source>
</evidence>
<evidence type="ECO:0000255" key="6">
    <source>
        <dbReference type="PROSITE-ProRule" id="PRU10095"/>
    </source>
</evidence>
<evidence type="ECO:0000256" key="7">
    <source>
        <dbReference type="SAM" id="MobiDB-lite"/>
    </source>
</evidence>
<proteinExistence type="evidence at transcript level"/>
<keyword id="KW-0165">Cleavage on pair of basic residues</keyword>
<keyword id="KW-1015">Disulfide bond</keyword>
<keyword id="KW-0272">Extracellular matrix</keyword>
<keyword id="KW-0325">Glycoprotein</keyword>
<keyword id="KW-0378">Hydrolase</keyword>
<keyword id="KW-0479">Metal-binding</keyword>
<keyword id="KW-0482">Metalloprotease</keyword>
<keyword id="KW-0645">Protease</keyword>
<keyword id="KW-1185">Reference proteome</keyword>
<keyword id="KW-0964">Secreted</keyword>
<keyword id="KW-0732">Signal</keyword>
<keyword id="KW-0862">Zinc</keyword>
<keyword id="KW-0865">Zymogen</keyword>
<sequence>MSQTGSHPGRGLAGRWLWGAQPCLLLPIVPLSWLVWLLLLLLASLLPSARLASPLPREEEIVFPEKLNGSVLPGSGAPARLLCRLQAFGETLLLELEHDSGVQVEGLTVQYLGQAPELLGGAEPGTYLTGTINGEPESVASLHWDGGALLGVLQYRGAELHLQPLEGGTPNSAGGPGAHILRRKSPASGQGPMCNVKAPLGSPSPRPRRAKRFASLSRFVETLVVADDKMAAFHGAGLKRYLLTVMAAAAKAFKHPSIRNPVSLVVTRLVILGSGEEGPQVGPSAAQTLRSFCAWQRGLNTPEDSDPDHFDTAILFTRQDLCGVSTCDTLGMADVGTVCDPARSCAIVEDDGLQSAYTAAHELGHVFNMLHDNSKPCISLNGPLSTSRHVMAPVMAHVDPEEPWSPCSARFITDFLDNGYGHCLLDKPEAPLHLPVTFPGKDYDADRQCQLTFGPDSRHCPQLPPPCAALWCSGHLNGHAMCQTKHSPWADGTPCGPAQACMGGRCLHMDQLQDFNIPQAGGWGPWGPWGDCSRTCGGGVQFSSRDCTRPVPRNGGKYCEGRRTRFRSCNTEDCPTGSVLTFREEQCAAYNHCTDLFKSFPGPMDWVPRYTGVAPQDQCKLTCQARALGYYYVLEPRVVDGTPCSPDSSSVCVQGRCIHAGCDRIIGSKKKFDKCMVCGGDGSGCSKQSGSFRKFRYGYNNVVTIPTGATHILVRQQGNPGHRSIYLALKLPDGSYALNGEYTLMPSPTDVVLPGAISLRYSGATAASETLSGHGPLAQPLTLQVLVAGNPQDARLRYSFFVPRPTPSTPHPTPQDWLHRRAQILEILRRRPWVGRK</sequence>
<dbReference type="EC" id="3.4.24.82"/>
<dbReference type="EMBL" id="CR857094">
    <property type="protein sequence ID" value="CAH89399.1"/>
    <property type="molecule type" value="mRNA"/>
</dbReference>
<dbReference type="SMR" id="Q5RFQ8"/>
<dbReference type="STRING" id="9601.ENSPPYP00000000708"/>
<dbReference type="MEROPS" id="M12.221"/>
<dbReference type="GlyCosmos" id="Q5RFQ8">
    <property type="glycosylation" value="1 site, No reported glycans"/>
</dbReference>
<dbReference type="eggNOG" id="KOG3538">
    <property type="taxonomic scope" value="Eukaryota"/>
</dbReference>
<dbReference type="InParanoid" id="Q5RFQ8"/>
<dbReference type="Proteomes" id="UP000001595">
    <property type="component" value="Unplaced"/>
</dbReference>
<dbReference type="GO" id="GO:0031012">
    <property type="term" value="C:extracellular matrix"/>
    <property type="evidence" value="ECO:0007669"/>
    <property type="project" value="TreeGrafter"/>
</dbReference>
<dbReference type="GO" id="GO:0005576">
    <property type="term" value="C:extracellular region"/>
    <property type="evidence" value="ECO:0007669"/>
    <property type="project" value="UniProtKB-KW"/>
</dbReference>
<dbReference type="GO" id="GO:0046872">
    <property type="term" value="F:metal ion binding"/>
    <property type="evidence" value="ECO:0007669"/>
    <property type="project" value="UniProtKB-KW"/>
</dbReference>
<dbReference type="GO" id="GO:0004222">
    <property type="term" value="F:metalloendopeptidase activity"/>
    <property type="evidence" value="ECO:0007669"/>
    <property type="project" value="InterPro"/>
</dbReference>
<dbReference type="GO" id="GO:0008237">
    <property type="term" value="F:metallopeptidase activity"/>
    <property type="evidence" value="ECO:0000250"/>
    <property type="project" value="UniProtKB"/>
</dbReference>
<dbReference type="GO" id="GO:0008233">
    <property type="term" value="F:peptidase activity"/>
    <property type="evidence" value="ECO:0000250"/>
    <property type="project" value="UniProtKB"/>
</dbReference>
<dbReference type="GO" id="GO:0030198">
    <property type="term" value="P:extracellular matrix organization"/>
    <property type="evidence" value="ECO:0007669"/>
    <property type="project" value="InterPro"/>
</dbReference>
<dbReference type="GO" id="GO:0006508">
    <property type="term" value="P:proteolysis"/>
    <property type="evidence" value="ECO:0007669"/>
    <property type="project" value="UniProtKB-KW"/>
</dbReference>
<dbReference type="CDD" id="cd04273">
    <property type="entry name" value="ZnMc_ADAMTS_like"/>
    <property type="match status" value="1"/>
</dbReference>
<dbReference type="FunFam" id="2.20.100.10:FF:000006">
    <property type="entry name" value="A disintegrin and metalloproteinase with thrombospondin motifs 1"/>
    <property type="match status" value="1"/>
</dbReference>
<dbReference type="FunFam" id="2.60.120.830:FF:000001">
    <property type="entry name" value="A disintegrin and metalloproteinase with thrombospondin motifs 1"/>
    <property type="match status" value="1"/>
</dbReference>
<dbReference type="FunFam" id="3.40.1620.60:FF:000003">
    <property type="entry name" value="A disintegrin and metalloproteinase with thrombospondin motifs 1"/>
    <property type="match status" value="1"/>
</dbReference>
<dbReference type="FunFam" id="3.40.390.10:FF:000001">
    <property type="entry name" value="A disintegrin and metalloproteinase with thrombospondin motifs 1"/>
    <property type="match status" value="1"/>
</dbReference>
<dbReference type="Gene3D" id="2.60.120.830">
    <property type="match status" value="1"/>
</dbReference>
<dbReference type="Gene3D" id="3.40.1620.60">
    <property type="match status" value="1"/>
</dbReference>
<dbReference type="Gene3D" id="3.40.390.10">
    <property type="entry name" value="Collagenase (Catalytic Domain)"/>
    <property type="match status" value="1"/>
</dbReference>
<dbReference type="Gene3D" id="2.20.100.10">
    <property type="entry name" value="Thrombospondin type-1 (TSP1) repeat"/>
    <property type="match status" value="1"/>
</dbReference>
<dbReference type="InterPro" id="IPR006586">
    <property type="entry name" value="ADAM_Cys-rich"/>
</dbReference>
<dbReference type="InterPro" id="IPR013273">
    <property type="entry name" value="ADAMTS/ADAMTS-like"/>
</dbReference>
<dbReference type="InterPro" id="IPR050439">
    <property type="entry name" value="ADAMTS_ADAMTS-like"/>
</dbReference>
<dbReference type="InterPro" id="IPR041645">
    <property type="entry name" value="ADAMTS_CR_2"/>
</dbReference>
<dbReference type="InterPro" id="IPR045371">
    <property type="entry name" value="ADAMTS_CR_3"/>
</dbReference>
<dbReference type="InterPro" id="IPR010294">
    <property type="entry name" value="ADAMTS_spacer1"/>
</dbReference>
<dbReference type="InterPro" id="IPR024079">
    <property type="entry name" value="MetalloPept_cat_dom_sf"/>
</dbReference>
<dbReference type="InterPro" id="IPR001590">
    <property type="entry name" value="Peptidase_M12B"/>
</dbReference>
<dbReference type="InterPro" id="IPR000884">
    <property type="entry name" value="TSP1_rpt"/>
</dbReference>
<dbReference type="InterPro" id="IPR036383">
    <property type="entry name" value="TSP1_rpt_sf"/>
</dbReference>
<dbReference type="PANTHER" id="PTHR13723:SF38">
    <property type="entry name" value="A DISINTEGRIN AND METALLOPROTEINASE WITH THROMBOSPONDIN MOTIFS 4"/>
    <property type="match status" value="1"/>
</dbReference>
<dbReference type="PANTHER" id="PTHR13723">
    <property type="entry name" value="ADAMTS A DISINTEGRIN AND METALLOPROTEASE WITH THROMBOSPONDIN MOTIFS PROTEASE"/>
    <property type="match status" value="1"/>
</dbReference>
<dbReference type="Pfam" id="PF17771">
    <property type="entry name" value="ADAMTS_CR_2"/>
    <property type="match status" value="1"/>
</dbReference>
<dbReference type="Pfam" id="PF19236">
    <property type="entry name" value="ADAMTS_CR_3"/>
    <property type="match status" value="1"/>
</dbReference>
<dbReference type="Pfam" id="PF05986">
    <property type="entry name" value="ADAMTS_spacer1"/>
    <property type="match status" value="1"/>
</dbReference>
<dbReference type="Pfam" id="PF01421">
    <property type="entry name" value="Reprolysin"/>
    <property type="match status" value="1"/>
</dbReference>
<dbReference type="Pfam" id="PF00090">
    <property type="entry name" value="TSP_1"/>
    <property type="match status" value="1"/>
</dbReference>
<dbReference type="PRINTS" id="PR01857">
    <property type="entry name" value="ADAMTSFAMILY"/>
</dbReference>
<dbReference type="SMART" id="SM00608">
    <property type="entry name" value="ACR"/>
    <property type="match status" value="1"/>
</dbReference>
<dbReference type="SMART" id="SM00209">
    <property type="entry name" value="TSP1"/>
    <property type="match status" value="1"/>
</dbReference>
<dbReference type="SUPFAM" id="SSF55486">
    <property type="entry name" value="Metalloproteases ('zincins'), catalytic domain"/>
    <property type="match status" value="1"/>
</dbReference>
<dbReference type="SUPFAM" id="SSF82895">
    <property type="entry name" value="TSP-1 type 1 repeat"/>
    <property type="match status" value="1"/>
</dbReference>
<dbReference type="PROSITE" id="PS50215">
    <property type="entry name" value="ADAM_MEPRO"/>
    <property type="match status" value="1"/>
</dbReference>
<dbReference type="PROSITE" id="PS50092">
    <property type="entry name" value="TSP1"/>
    <property type="match status" value="1"/>
</dbReference>
<dbReference type="PROSITE" id="PS00142">
    <property type="entry name" value="ZINC_PROTEASE"/>
    <property type="match status" value="1"/>
</dbReference>
<accession>Q5RFQ8</accession>
<organism>
    <name type="scientific">Pongo abelii</name>
    <name type="common">Sumatran orangutan</name>
    <name type="synonym">Pongo pygmaeus abelii</name>
    <dbReference type="NCBI Taxonomy" id="9601"/>
    <lineage>
        <taxon>Eukaryota</taxon>
        <taxon>Metazoa</taxon>
        <taxon>Chordata</taxon>
        <taxon>Craniata</taxon>
        <taxon>Vertebrata</taxon>
        <taxon>Euteleostomi</taxon>
        <taxon>Mammalia</taxon>
        <taxon>Eutheria</taxon>
        <taxon>Euarchontoglires</taxon>
        <taxon>Primates</taxon>
        <taxon>Haplorrhini</taxon>
        <taxon>Catarrhini</taxon>
        <taxon>Hominidae</taxon>
        <taxon>Pongo</taxon>
    </lineage>
</organism>
<comment type="function">
    <text evidence="2">Cleaves aggrecan, a cartilage proteoglycan, at the '392-Glu-|-Ala-393' site and may be involved in its turnover. Also cleaves COMP. May play an important role in the destruction of aggrecan in arthritic diseases.</text>
</comment>
<comment type="catalytic activity">
    <reaction>
        <text>Glutamyl endopeptidase. Bonds cleaved include 370-Thr-Glu-Gly-Glu-|-Ala-Arg-Gly-Ser-377 in the interglobular domain of mammalian aggrecan.</text>
        <dbReference type="EC" id="3.4.24.82"/>
    </reaction>
</comment>
<comment type="cofactor">
    <cofactor evidence="2">
        <name>Zn(2+)</name>
        <dbReference type="ChEBI" id="CHEBI:29105"/>
    </cofactor>
    <text evidence="2">Binds 1 zinc ion per subunit.</text>
</comment>
<comment type="subunit">
    <text evidence="1">Interacts with SRPX2.</text>
</comment>
<comment type="subcellular location">
    <subcellularLocation>
        <location evidence="1">Secreted</location>
        <location evidence="1">Extracellular space</location>
        <location evidence="1">Extracellular matrix</location>
    </subcellularLocation>
</comment>
<comment type="domain">
    <text evidence="2">The spacer domain and the TSP type-1 domains are important for a tight interaction with the extracellular matrix. The spacer domain is also required for cleavage of COMP (By similarity).</text>
</comment>
<comment type="domain">
    <text>The conserved cysteine present in the cysteine-switch motif binds the catalytic zinc ion, thus inhibiting the enzyme. The dissociation of the cysteine from the zinc ion upon the activation-peptide release activates the enzyme.</text>
</comment>
<comment type="PTM">
    <text evidence="1">The precursor is cleaved by a furin endopeptidase.</text>
</comment>
<comment type="PTM">
    <text evidence="1">Glycosylated. Can be O-fucosylated by POFUT2 on a serine or a threonine residue found within the consensus sequence C1-X(2)-(S/T)-C2-G of the TSP type-1 repeat domains where C1 and C2 are the first and second cysteine residue of the repeat, respectively. Fucosylated repeats can then be further glycosylated by the addition of a beta-1,3-glucose residue by the glucosyltransferase, B3GALTL. Fucosylation mediates the efficient secretion of ADAMTS family members. Can also be C-glycosylated with one or two mannose molecules on tryptophan residues within the consensus sequence W-X-X-W of the TPRs, and N-glycosylated. These other glycosylations can also facilitate secretion (By similarity).</text>
</comment>
<protein>
    <recommendedName>
        <fullName>A disintegrin and metalloproteinase with thrombospondin motifs 4</fullName>
        <shortName>ADAM-TS 4</shortName>
        <shortName>ADAM-TS4</shortName>
        <shortName>ADAMTS-4</shortName>
        <ecNumber>3.4.24.82</ecNumber>
    </recommendedName>
    <alternativeName>
        <fullName>Aggrecanase-1</fullName>
    </alternativeName>
</protein>